<evidence type="ECO:0000255" key="1">
    <source>
        <dbReference type="HAMAP-Rule" id="MF_00689"/>
    </source>
</evidence>
<accession>B7I7S8</accession>
<sequence length="271" mass="31947">MKSYHPKSLLNDLQYYITPPHDCSYLENKSARMVFLDPIHRIDVVTLSELSRLGFRRSGDFVYRPECHLCRQCLSCRVPVADFQMNSMQKKAWKRNQDLTMTVLPTRQASQIHYDLYERYINERHADGDMFPPSLDQFEKFLVHSCTDSFFLELWKDNRLISVSTCDLMDDGLSAVYTFFDPDEHRRSLGVYSILNQIEYVKTLGLEYVYLGYWVPHSAKMNYKSQYTPLELLLDGQWRRLNRSLSPEEINQLGNSLMTTLPSEWNNLIIK</sequence>
<keyword id="KW-0012">Acyltransferase</keyword>
<keyword id="KW-0963">Cytoplasm</keyword>
<keyword id="KW-0808">Transferase</keyword>
<feature type="chain" id="PRO_1000131963" description="Aspartate/glutamate leucyltransferase">
    <location>
        <begin position="1"/>
        <end position="271"/>
    </location>
</feature>
<dbReference type="EC" id="2.3.2.29" evidence="1"/>
<dbReference type="EMBL" id="CP001182">
    <property type="protein sequence ID" value="ACJ40712.1"/>
    <property type="molecule type" value="Genomic_DNA"/>
</dbReference>
<dbReference type="RefSeq" id="WP_000844343.1">
    <property type="nucleotide sequence ID" value="NC_011586.2"/>
</dbReference>
<dbReference type="SMR" id="B7I7S8"/>
<dbReference type="KEGG" id="abn:AB57_0920"/>
<dbReference type="HOGENOM" id="CLU_077607_0_0_6"/>
<dbReference type="Proteomes" id="UP000007094">
    <property type="component" value="Chromosome"/>
</dbReference>
<dbReference type="GO" id="GO:0005737">
    <property type="term" value="C:cytoplasm"/>
    <property type="evidence" value="ECO:0007669"/>
    <property type="project" value="UniProtKB-SubCell"/>
</dbReference>
<dbReference type="GO" id="GO:0004057">
    <property type="term" value="F:arginyl-tRNA--protein transferase activity"/>
    <property type="evidence" value="ECO:0007669"/>
    <property type="project" value="InterPro"/>
</dbReference>
<dbReference type="GO" id="GO:0008914">
    <property type="term" value="F:leucyl-tRNA--protein transferase activity"/>
    <property type="evidence" value="ECO:0007669"/>
    <property type="project" value="UniProtKB-UniRule"/>
</dbReference>
<dbReference type="GO" id="GO:0071596">
    <property type="term" value="P:ubiquitin-dependent protein catabolic process via the N-end rule pathway"/>
    <property type="evidence" value="ECO:0007669"/>
    <property type="project" value="InterPro"/>
</dbReference>
<dbReference type="HAMAP" id="MF_00689">
    <property type="entry name" value="Bpt"/>
    <property type="match status" value="1"/>
</dbReference>
<dbReference type="InterPro" id="IPR016181">
    <property type="entry name" value="Acyl_CoA_acyltransferase"/>
</dbReference>
<dbReference type="InterPro" id="IPR017138">
    <property type="entry name" value="Asp_Glu_LeuTrfase"/>
</dbReference>
<dbReference type="InterPro" id="IPR030700">
    <property type="entry name" value="N-end_Aminoacyl_Trfase"/>
</dbReference>
<dbReference type="InterPro" id="IPR007472">
    <property type="entry name" value="N-end_Aminoacyl_Trfase_C"/>
</dbReference>
<dbReference type="InterPro" id="IPR007471">
    <property type="entry name" value="N-end_Aminoacyl_Trfase_N"/>
</dbReference>
<dbReference type="NCBIfam" id="NF002341">
    <property type="entry name" value="PRK01305.1-1"/>
    <property type="match status" value="1"/>
</dbReference>
<dbReference type="NCBIfam" id="NF002342">
    <property type="entry name" value="PRK01305.1-3"/>
    <property type="match status" value="1"/>
</dbReference>
<dbReference type="NCBIfam" id="NF002346">
    <property type="entry name" value="PRK01305.2-3"/>
    <property type="match status" value="1"/>
</dbReference>
<dbReference type="PANTHER" id="PTHR21367">
    <property type="entry name" value="ARGININE-TRNA-PROTEIN TRANSFERASE 1"/>
    <property type="match status" value="1"/>
</dbReference>
<dbReference type="PANTHER" id="PTHR21367:SF1">
    <property type="entry name" value="ARGINYL-TRNA--PROTEIN TRANSFERASE 1"/>
    <property type="match status" value="1"/>
</dbReference>
<dbReference type="Pfam" id="PF04377">
    <property type="entry name" value="ATE_C"/>
    <property type="match status" value="1"/>
</dbReference>
<dbReference type="Pfam" id="PF04376">
    <property type="entry name" value="ATE_N"/>
    <property type="match status" value="1"/>
</dbReference>
<dbReference type="PIRSF" id="PIRSF037208">
    <property type="entry name" value="ATE_pro_prd"/>
    <property type="match status" value="1"/>
</dbReference>
<dbReference type="SUPFAM" id="SSF55729">
    <property type="entry name" value="Acyl-CoA N-acyltransferases (Nat)"/>
    <property type="match status" value="1"/>
</dbReference>
<name>BPT_ACIB5</name>
<organism>
    <name type="scientific">Acinetobacter baumannii (strain AB0057)</name>
    <dbReference type="NCBI Taxonomy" id="480119"/>
    <lineage>
        <taxon>Bacteria</taxon>
        <taxon>Pseudomonadati</taxon>
        <taxon>Pseudomonadota</taxon>
        <taxon>Gammaproteobacteria</taxon>
        <taxon>Moraxellales</taxon>
        <taxon>Moraxellaceae</taxon>
        <taxon>Acinetobacter</taxon>
        <taxon>Acinetobacter calcoaceticus/baumannii complex</taxon>
    </lineage>
</organism>
<reference key="1">
    <citation type="journal article" date="2008" name="J. Bacteriol.">
        <title>Comparative genome sequence analysis of multidrug-resistant Acinetobacter baumannii.</title>
        <authorList>
            <person name="Adams M.D."/>
            <person name="Goglin K."/>
            <person name="Molyneaux N."/>
            <person name="Hujer K.M."/>
            <person name="Lavender H."/>
            <person name="Jamison J.J."/>
            <person name="MacDonald I.J."/>
            <person name="Martin K.M."/>
            <person name="Russo T."/>
            <person name="Campagnari A.A."/>
            <person name="Hujer A.M."/>
            <person name="Bonomo R.A."/>
            <person name="Gill S.R."/>
        </authorList>
    </citation>
    <scope>NUCLEOTIDE SEQUENCE [LARGE SCALE GENOMIC DNA]</scope>
    <source>
        <strain>AB0057</strain>
    </source>
</reference>
<gene>
    <name evidence="1" type="primary">bpt</name>
    <name type="ordered locus">AB57_0920</name>
</gene>
<protein>
    <recommendedName>
        <fullName evidence="1">Aspartate/glutamate leucyltransferase</fullName>
        <ecNumber evidence="1">2.3.2.29</ecNumber>
    </recommendedName>
</protein>
<proteinExistence type="inferred from homology"/>
<comment type="function">
    <text evidence="1">Functions in the N-end rule pathway of protein degradation where it conjugates Leu from its aminoacyl-tRNA to the N-termini of proteins containing an N-terminal aspartate or glutamate.</text>
</comment>
<comment type="catalytic activity">
    <reaction evidence="1">
        <text>N-terminal L-glutamyl-[protein] + L-leucyl-tRNA(Leu) = N-terminal L-leucyl-L-glutamyl-[protein] + tRNA(Leu) + H(+)</text>
        <dbReference type="Rhea" id="RHEA:50412"/>
        <dbReference type="Rhea" id="RHEA-COMP:9613"/>
        <dbReference type="Rhea" id="RHEA-COMP:9622"/>
        <dbReference type="Rhea" id="RHEA-COMP:12664"/>
        <dbReference type="Rhea" id="RHEA-COMP:12668"/>
        <dbReference type="ChEBI" id="CHEBI:15378"/>
        <dbReference type="ChEBI" id="CHEBI:64721"/>
        <dbReference type="ChEBI" id="CHEBI:78442"/>
        <dbReference type="ChEBI" id="CHEBI:78494"/>
        <dbReference type="ChEBI" id="CHEBI:133041"/>
        <dbReference type="EC" id="2.3.2.29"/>
    </reaction>
</comment>
<comment type="catalytic activity">
    <reaction evidence="1">
        <text>N-terminal L-aspartyl-[protein] + L-leucyl-tRNA(Leu) = N-terminal L-leucyl-L-aspartyl-[protein] + tRNA(Leu) + H(+)</text>
        <dbReference type="Rhea" id="RHEA:50420"/>
        <dbReference type="Rhea" id="RHEA-COMP:9613"/>
        <dbReference type="Rhea" id="RHEA-COMP:9622"/>
        <dbReference type="Rhea" id="RHEA-COMP:12669"/>
        <dbReference type="Rhea" id="RHEA-COMP:12674"/>
        <dbReference type="ChEBI" id="CHEBI:15378"/>
        <dbReference type="ChEBI" id="CHEBI:64720"/>
        <dbReference type="ChEBI" id="CHEBI:78442"/>
        <dbReference type="ChEBI" id="CHEBI:78494"/>
        <dbReference type="ChEBI" id="CHEBI:133042"/>
        <dbReference type="EC" id="2.3.2.29"/>
    </reaction>
</comment>
<comment type="subcellular location">
    <subcellularLocation>
        <location evidence="1">Cytoplasm</location>
    </subcellularLocation>
</comment>
<comment type="similarity">
    <text evidence="1">Belongs to the R-transferase family. Bpt subfamily.</text>
</comment>